<feature type="chain" id="PRO_0000436436" description="Nonribosomal peptide synthetase dtxS1">
    <location>
        <begin position="1"/>
        <end position="7913"/>
    </location>
</feature>
<feature type="domain" description="Carrier 1" evidence="2">
    <location>
        <begin position="789"/>
        <end position="865"/>
    </location>
</feature>
<feature type="domain" description="Carrier 2" evidence="2">
    <location>
        <begin position="1865"/>
        <end position="1941"/>
    </location>
</feature>
<feature type="domain" description="Carrier 3" evidence="2">
    <location>
        <begin position="3380"/>
        <end position="3456"/>
    </location>
</feature>
<feature type="domain" description="Carrier 4" evidence="2">
    <location>
        <begin position="4453"/>
        <end position="4529"/>
    </location>
</feature>
<feature type="domain" description="Carrier 5" evidence="2">
    <location>
        <begin position="5933"/>
        <end position="6009"/>
    </location>
</feature>
<feature type="domain" description="Carrier 6" evidence="2">
    <location>
        <begin position="7394"/>
        <end position="7470"/>
    </location>
</feature>
<feature type="region of interest" description="Adenylation 1" evidence="1">
    <location>
        <begin position="263"/>
        <end position="662"/>
    </location>
</feature>
<feature type="region of interest" description="Condensation 1" evidence="1">
    <location>
        <begin position="903"/>
        <end position="1171"/>
    </location>
</feature>
<feature type="region of interest" description="Adenylation 2" evidence="1">
    <location>
        <begin position="1332"/>
        <end position="1740"/>
    </location>
</feature>
<feature type="region of interest" description="Condensation 2" evidence="1">
    <location>
        <begin position="1965"/>
        <end position="2249"/>
    </location>
</feature>
<feature type="region of interest" description="Adenylation 3" evidence="1">
    <location>
        <begin position="2863"/>
        <end position="3255"/>
    </location>
</feature>
<feature type="region of interest" description="Condensation 3" evidence="1">
    <location>
        <begin position="3496"/>
        <end position="3761"/>
    </location>
</feature>
<feature type="region of interest" description="Adenylation 4" evidence="1">
    <location>
        <begin position="3924"/>
        <end position="4321"/>
    </location>
</feature>
<feature type="region of interest" description="Disordered" evidence="3">
    <location>
        <begin position="4439"/>
        <end position="4459"/>
    </location>
</feature>
<feature type="region of interest" description="Condensation 4" evidence="1">
    <location>
        <begin position="4545"/>
        <end position="4837"/>
    </location>
</feature>
<feature type="region of interest" description="Adenylation 5" evidence="1">
    <location>
        <begin position="5006"/>
        <end position="5405"/>
    </location>
</feature>
<feature type="region of interest" description="Condensation 5" evidence="1">
    <location>
        <begin position="6023"/>
        <end position="6315"/>
    </location>
</feature>
<feature type="region of interest" description="Adenylation 6" evidence="1">
    <location>
        <begin position="6481"/>
        <end position="6766"/>
    </location>
</feature>
<feature type="region of interest" description="Condensation 6" evidence="1">
    <location>
        <begin position="7501"/>
        <end position="7771"/>
    </location>
</feature>
<feature type="compositionally biased region" description="Polar residues" evidence="3">
    <location>
        <begin position="4439"/>
        <end position="4450"/>
    </location>
</feature>
<feature type="modified residue" description="O-(pantetheine 4'-phosphoryl)serine" evidence="2">
    <location>
        <position position="826"/>
    </location>
</feature>
<feature type="modified residue" description="O-(pantetheine 4'-phosphoryl)serine" evidence="2">
    <location>
        <position position="1902"/>
    </location>
</feature>
<feature type="modified residue" description="O-(pantetheine 4'-phosphoryl)serine" evidence="2">
    <location>
        <position position="3417"/>
    </location>
</feature>
<feature type="modified residue" description="O-(pantetheine 4'-phosphoryl)serine" evidence="2">
    <location>
        <position position="4490"/>
    </location>
</feature>
<feature type="modified residue" description="O-(pantetheine 4'-phosphoryl)serine" evidence="2">
    <location>
        <position position="5970"/>
    </location>
</feature>
<feature type="modified residue" description="O-(pantetheine 4'-phosphoryl)serine" evidence="2">
    <location>
        <position position="7431"/>
    </location>
</feature>
<name>DTXS1_METRA</name>
<sequence>MPSRILPGKHMPAQGHQRREADYWQNALADCKCATFPAIPETVEQCLPDALVEHRFAKLQQNGAATSMSNVARAAWALVVARITNSDDVVFGAVVFGTTRDSNMTIVPVRIETAMDLTIAAYLGMVQQQEEDMTPFEQTGLSSIMQTCPGAQQACQFQSLLAVHSHESNGERLDDQRYALVLEIRPEEDQFSALARFDSRVMDHKTVERLLERFELVMTELCRGGPKMRVQDIHMAGKHDEEEIWKWNATVPEAVERCPHHIFEQRSRAHPNKLAVHAWDGVLTYGELDRLSGTLAGRLLDLGVGPDDLVPLCFEKSMYTVVAMVAVLKAGAGFVLLDPALPEQRLQIIVDQIQAKIMVSSVSTYEMSSRMASEVVAISSGFFSEVEPRPCTQSHPPSPSSVMYVVYTSGSTGTPKGAAITHQNHATALYYQAERLGLTDQSRIYDFSSYSFDISIFNAFSALTLGGCLCVPSDYERQDKLAESITSYNADFIYLTPTVARQLSPQKTPTLQTIAFIGEALHPKDVGIWWDKVRVVNAYGPSECTTASTLRTSPSTPEEACSIGKGAGMVTWIVDPNNHNVLLPPGSIGELLLEGPLIGRGYLGDAKKNAAAFIKDPAWLIKGASGSKGRSGRLYKTGDLVQYLADGNLKFIGRNDNQVKIRGNRVELGEVEHALRDCVETRSVVAEIIIPRGSKSSATLAAFLEAEEEEEDDTESEVTARMLPVPAEIKDKMAQRLPIYMVPTVLFSMKRLPMTASGKIHRKQLRDIGGRFSARQMVEMHTKGRAKRQPLSEVEKQVHRIWSQVLGIDASMIGLDDSFFELGGDSLGAMEVVSEARKVGLELTVVDIFKHRSVENVAGQARRTTNGSLEALSPFSLISKDTDVASLIQDMAMDYELDGASIQDAFPCTSLQEGLVSLTSKSPGDYVMQGILELAPDIDVDAFRNAWEQVATAGQILRTRILQSRHHGTLQIVVDESVSWVEATDLDSYLAEDKKKPMEIGQPLVRYALIKDDNAATRWFVWTIHHSLFDEWSLTLIIDAVTRVYQGKSITMPHFQPFIKYVEKQRDEKMANYWRQSLADCECPSFPALPPSLEQPVTDGVMEHALHHPQHDSSVTASTIIRAAWALITSRMTNSDDVVFGATLSGRGAAVPGVEAIAAPTITTVPVRIRLSREQKVADYLKTVQELATDMIPFEQMGLQHIAKLSPGARQACNFQTLLVIQPHDSSKTQEVLGKWHLSNQQQSFNTYSLILEIQLGETMAARASYDSRVIKPWLVERLLERLDFLMDQLDNAEPDQAVAEVDTVSGKDIEQLWNWNRTVPTTSELCIHHVLETQAHSRPDSPALCAWDGQVTYRELNHLAAQLATHLVKRGVGPEVLVPLYFEKSMWTNVAMLGVLKAGGGFVLLDPSLPEQRLQEMIRQTKAKLLVSSRSNQSASLRLVPEVVTLGSKFFAELASEPDMNGTKGHKETIGQATPFSTAYVLFTSGSTGTPKGVVITHSNVTSAVPEHVRCLGYTAASRIYDFASYSFGASLNNAFAALMAGGCLCIPSDEDRRSNLAASLTALKGTSILLTPSVAESLSPDSVSGLKTLIFGGEAVRHKDVKPWWGKAKVLTAYGSSEVTTVATVNTQASNMDEAAEIGTGAGGVTWVVDPDDHHKLLPPGCIGELLLEGPLVGSGYLGDAIKSAEVFIKNPPAWLLEGASGHQGRRGVLYKTGDLVRYNENGNLSYIGRKDAQVKIRGQRVELGEVEFRVQQCFPEAKQVAAEVVVPCGKKSSPTLAAFLVLDDAQQASSSFQTLPVDTDRMEQLAKQLPSYMVPVLFLAIKEMPMTASGKMNRRRLRELGGTVTAQQLADLGTSGQVAKRQPRTKLERQLQALWARVLNIDASAIGLDDSFYRLGGDSISAMQVSHGARAFHVHIGVVDILRQRTISNLAQATGTQGSTNGATLINAHAPDQPVTRVDNGPAQLSPIQRLYFVLQNDPTACFDQFFYLGLRRTTSHQLVSAALETIVRRHGVLRARFRQNDHGGWEQRISDDVDASLLFRVESGVSGTAEAIAKSRAALSITEGPIFSAVLFDKPDHQTLFLTIHHLVIDLVSWRVLMQELEDIITNGPLTAPPSMDFPTWSAMQAQYAKESLHANAPDLPESQTNMAYWGMESNPNLKSGAIVEHFTMDEPTSSLILGRCNDALGTRPLELMIAALAYSFSRIFSDCALPAVFSEGHGREVWHDSLDITTTLGWFSTIFPVRVSPGANGLIDFIRETKDCIRSLSRNGWSYFTSRFADESNASRFGTDFPVEVMFNYAGFYRNLERQDGLFEQLSVPENCDPPSCRDVRRFALFDFDVQVVRGCIVGEVEFHKDMHHRDDIMRWIGEYQSTLRQMATDLPRISPGWTLSDFPNVFNTYGDIQEFRNQTLVQLGVEPLDVEDIFPCAPLQQGIILAQAKEEANYLRWCDIEIELDANQQLDRAKLTDAWKAVVKRHAMLRAVLVDDFPGSSRPMHVVLKDPELGISWGAETMCFPDFNKYGLQHRLQVCSFGERRARLRLHMNHAITDGFSQSLLCKDLQAAYHDQLEAAGSYKDFILHLENQSQEARLEFWSQYLAGVEPTLFPTSDCTIPSKVEQVAVPNLDSESIRAFCAKWDVTAATIMKLAWGLVLGMYAATPAPCFGNLYSGRDIPVEGIDSIFGPLIGMIPCCIHLNGSKGVLDTLKEVQTDYLSTIPYQHSPLAEVHRAAGLLGSRQLFNTLLSYQKNTDETRGNEGGLTVRVADSYDLTEYDVTIDVVDGTAEIEVLIDFRAGCLSTNDAARLAACFSAAVSDIVANPLKPTKDLCLLGRRDLDIIWGWNSTVPAADERFVHDLIRERSLAQPHEPAICAWDGELSYKELDDLSTRLAGHLHQVGVQPGALVPLCFEKSLYTSVAMLAVVKMGAAFVLLDPSLPEQRLQSMTQQVGSNLILSSASNRHLCARLCKTVVQVSADFIPTTTSSIPRPKTEPHSTAMFAVFTSGSTGTPKGIVLTHTNFTTALMHQAEALGFKETSRVFDFASYAFDLAVHNAFATYVTGGCLCVPSDEDRRGNPASVMKAMRATVVELTPSVSRLIDPATLPDLETIIMGGEALSVDDVNRWWGKARIVNIYGPAETHISTVNADAPSPEEATLLGKGSGLVTWIVDPENRNRLMPPGCIGELALEGPLVGQGYLNDAQKTAASFVDDPAWLLQGSPGHSGRHGRVYFSGDLVRYQDHGSLAFVARKDAQIKIRGQRVELGEVEHCVQQCLPEAIRVVVDVITPQGTSTPMLSAFLQMDKAIEVESPAVEVVRIPTDTKNMLSQRLPGYMVPAVFFYMRRLPQTPSGKTDRIQLRQVGGSFSIQQLATIQTNGQGPKRQPLSEAERKMQHIWAQVLNIDMASIGLDDNFFELGGDSISVMKLVAQARKEGLVLTVAAIFRQPTLANVTHQAVAQLEKGPQDLSPFSLLGEGLDVKAFAEAAMKQHQIPTSVTILDAFPCTPLQEGLLSLSMKRSGNYVLQAKLELSSNIDISRFRNAWEEVVRSLPILRTRIIEHDSLGLLQAVTDENISWIETSGLDDYLEADRQQTMGVGQPLARYALVGESDARWFVWTVHHVLYDGWSEPLIIKAVNKAYQGSSLDLGPSFQTFIKYIQDSDTSKMVDYWRQALNDCEAVPFPPPSSSTEVQVADASVEQPLPRPRNKKFTASTVIRAAWALVAGGATDSGDVCFGVTVSGRNAPVPDIERMVGPTFATLPLRVRLSKNQAIADYLETIQQQATDMIPFEQMGLHRIAKISPGSQQACNFQTLLVIQPQEEDAGENVLGEWHDGDQHQWFNTHGLTILVQISASDITVKASFNAKVISAWAVQLLLQQLAHVMQQLDNGGVKALATIAMATPQDLEKIWAWNQNVPRPADQCIHELIADRVRIHPNAPAVCAWDGELTYQRLDQLSSDLASRLADLGVGPAVFVALCFEKSMWATVAMLAMVKTGGAFVLLDASLPQQRLKSVVGQVEAAMILTSSTNETLSRQLCENVVIAQDLMTGMQDIVRPLPAPELDSVIYAVFTSGTTGTPKGAIINHRSSASAVLHQIKGFGYTTETRVYDFSTYSFDGCILNAFTVLAAGGCLCVPTDDGRKNNLADSMESLRSNAVFLTPSVAELLSPEQLPSLRSMILGGEAIRVKDIQPWWDAESVKIITIYGPSECTPVSMINPEPTSPENAVRLGWGAGQVTWIVDPEDFNSLTPLGSIGELLLEGPLVGQGYLHEPEKTADAFIMDPVWLLQGVDGRPGRHGRLYKTGDLVRYNQDGSISYIGRKDDQVKLRGQRVELGEVERHVRISMPQAKQAVAEVIVPRSDKSNPALAVFLQIEDSMMINGVSTENPPKAAVLLPSADVLQKLAESLPTYMVPTVFFAMRQLPMGTTGKMDRKELRRIGSSFSAQELAQARTAQQGPKRQPASEAERQMQQVWAKVLGIPPASVGRDDNFFQLGGDSITAMKLVGEARKAGLELVVADMFRYPRLHEAATQAQMLGRNTKVPKMLIDGPAEQSFAQARLWFLEQLYPGLTWYLMPCIMRLTGPLRLDALTAAFIALEDRHETLRTTFSTREGTNLQHIHAVRSRELTVVDMSADQESLPHVLSQDETTPFNLENEPGWRVTLYRVGDDEHILSIVLHHIISDGWSIDILRRELSSFYSAALRGEDPLSNIDPLPIQYKDFSVWQRQQAQVDEHERQLKYWMTELETSHPAEFLCDKPRPPTLSGKADVREVCIDGPVYDKLQEFCRTHGMTPFIVLLAAFRATHYRLTGDGDGVIGSPNANRDRWELKDTIGFFVNMQCLRVKIEDESVTFGELVKLVQSAAISSLANQDVPFERLVSKLRKERDLSRHPLIQLVFAVHSQLDLGKFALEGYEIEYIDQSITTRFDLEFHFFTEEKGLRGQLIFSTDLFHPDTIDNVLEVFRTVLEKGLNEPQTPVAALPLMTDGGYDKLDSMGLIQVKQTAYPRNSSIVDEFRQQVAACADRVAVKDASSQLTYAQLDGLSEHVAQWLMSKSLAPETLIGVFCGRSCQSIIAILGILKANHAYLPFDLKIPASRMEGIISSIGHMLVLTGDGVRVPSFALEVEFVMISEALEHGARMSSIQRNTCPSPSPSSLAYVMFTSGSTGRPKGVMVEHRSVLRLIKDDDLRPHGSGIIAHMSNIAFDAATWEIYGALLNGGTVICIDLLTVLDYAATSRIFAEEKIQAIFITPALLKQYLSNCPTAIGLLDTIYVGGDRLDPQDVFTARSLMRGGKVYNGYGPTENTTFSTTYRLPVKDICVNGVAIGRALSNSGAYVMDTQQCLVPLGVVGELVVTGDGLARGYLDSQRNTGRFINVTIDGKTVRAYRTGDLARCRPSDGQIECLRRMDAQVKIRGQRVELGEIEHVLRNHESVNDAVVTLQQDPQGARLIGFITLDEPDIQHKVQRMEQEVDGDDEKKQVEVWEESFDTDIYAGFDNVKPELIGRDFVGWTSMYDGSEIDKGEMNEWLDDTIDTILNGGQAGHVLELGSGSGMILFNLCNNGMRSYVGLDPSQKAVEFVTRAAKSMPMADKIRMYKGTATDVGHLGLTTEYDLAIVNSVAQYFPSLKYLTKVVERVLQQNAKTFFFGDMRSYAMYKEFTVTRSLYRVGKKPTKDDLRRQMASMEQMEVEFQVDPAFFTALPSLLPDLVEHVEILPKKMQATNELSCYRYAAVVHGKGQGLQIRDAEGPWIDFMKDGLHHESLLKLLQSSTSPTVSVANIPYSKTIFERHVLDMLGDADGDEDWLSSARQKANDCASLCAIDLVQLARSTGYQVEISWARQRSQRGGLDAIFHRHESNGQRVMFRFPIDDAHQSLSSQPLRQQVKQKIREQLRDGMQSQLLPYMIPQAVHILDKMPVNENGKVDRRALTESLQSRATRGPLRQPTSKTQRQLQAIWAQVLNTDANSIGLDDSFFQVGGDSLGAMRLVGDARKIGLNLAVADVFRRPVLRDMAEGLPLAKAMESIPKTEVDGPVEQSFAQRRLWFLEQLYPGLTWYMMPSAIRLRGHLELDALNTAVLALEKRHETLRTTFVSQNDVHLQEVHPFQAKKIRVVSVTEDNLMKALEDDQRTPFDLKTEPGWRVTVFRLDDTNYLLSIIMHHIVSDGWSVDILRAELEKFYSAAIRNQDPLALVESLPIQYRDFSVWQKQQDQLDEHQRQLSYWVKQLETSQPAEFLCDKPRPAALSGEAAVESLRIDGALYQQLRTFCRTQSVTPFVALLSTFRVAHFFLTGSTDATMGTVNANRDRWEVKDMIGFFVNMQCIRIRVEAESFKQLVQQVHATTIASFANQDVPFENIVSQLNRGRDLSRHPLAQLVFALHSQMDLGEFVLEGLDTEMVKVPPTTRFDLEFHFFQEQEAFQGEVLYSTDLFDAQTIRNMLSVFKRVLEAGLGDPNAAITSMSLLSDADYAKLDQMGLVEIDRVDCPDASIVDLFRQQALLNPDKVAVKDSSSQLTYAELDQQSDSTARWLAKRCLAPGTLIGVFSSRCCRTVVALLGILKANLAYLPFDVHTPRARMEKILGSVDGQTLVLVGNNVQVPEGLDVSFVPIAETLHEATSEIHITAPNATSLAYVMFTSGSTGNPKGVMINHRGIVRLVKGSNMASYLPSTPTMAHITNIAFDVSGWEIYGALLNGGMVVCISAMDVLDFRAVPEIFAREKIQAAIFTPALLKQYLIQCPPVIGALTALYVAGDRADSQDLFMAQGLMSGHIINAYGPTENSVISTLYCLQNGERCVNGVPIGKAISNSGAYVMDQQQQLVPLGVVGELVVTGDGLARGYTDPGRDIDRFVTVTIGHKRVKAYRTGDYVRYRTDGQLEFFGRIDGQIKIRGHRVELGEIEHCLRSHDSVHDAIVVLQEGQEAQLAAFVTVNEATEDAGQEEDVTDIVNVWGELFDADTYSTIQDVKPETIGRDFTGWVSTYTGQDIDKQEMNEWLDDTMATINAYEPRNVLEIGTGTGMILFNLKGVQSYVGLEPSEKAVEFTVRAAKSMSMLRDKVCVYQGTAADVKRLPTMLPNLVVINSVAQYFPSQEYLVKVIEDVVQLGGVETLFFGDIRSYALNTQFQASRALRIAGEAASKDEIRRKMEDIKRADMELMVDPAFFTALAARFKFIHHVEILPKRMKAVNELSCYRYSAVVHLQHDSQLHVHEVESEWIDFQKNNLNRQSLLELLGQTSSTLAVSNIPFQNTIIERHVVEALDRGQGPDWITSALRNAEHCPSMSVAGLVELAHLACFQVEISCARQYSQRGGLDAIFHRQQPSRGDRVLFRFPTDHNRPSHLLTSRPLRLQLYQTVQEGLFERLQTQLPSYMVPHAITVVDELPINENGKVDRRALAARTQTRTAARASIRQPTTDMEREMQRIWSHVLHISLDSIGLDDSFFHLGGNSITAMRIVSEARKVGFKLSVADIFRHDVLEDLACHLSPEEEETDIVFVDRPPPVSVLEEITALGVSVDDVEDVLPLTSFQEKIVLDGETVGQHANYFYIDLEDLDVSKIQTSYWATLDKFSILRARFLHLEGKLWQVVFRQLRLPIHIEDVDDVNQAAHQFCVKDLHEMSSTDIPISITLLRHKDGVRLILRLSHAQYDGISFPIILQSLMDEYSGIERPAGPTFGRFLSYAAQQRTKAITYWTKVLTGSSLTVPEPILRPKAISGSPQRVYEEAEIDLPQLPSKTTPATLLSAAWALLLSHITGEDDVVFGHVVAGRNAAMSGIDEVVGTCLNIVPIRVNLPAAHTPRQLLLSVQEQFFFGEADLLGFKDIIEQCTDWPAGTTFDSMIQHQNIDEHPEIESAGAASQVQFFENSHLVPPSLFVVSYPRGRHLDVKLFGNTHILTKEMAKGLIDRLCKITEELGNLDCSLQVLRDRHGRLSEE</sequence>
<dbReference type="EC" id="6.3.2.-" evidence="4"/>
<dbReference type="EMBL" id="ADNJ02000010">
    <property type="protein sequence ID" value="EFY94500.2"/>
    <property type="molecule type" value="Genomic_DNA"/>
</dbReference>
<dbReference type="RefSeq" id="XP_007826232.2">
    <property type="nucleotide sequence ID" value="XM_007828041.2"/>
</dbReference>
<dbReference type="SMR" id="E9FCP4"/>
<dbReference type="GeneID" id="19264329"/>
<dbReference type="KEGG" id="maj:MAA_10043"/>
<dbReference type="HOGENOM" id="CLU_000022_60_0_1"/>
<dbReference type="OrthoDB" id="416786at2759"/>
<dbReference type="Proteomes" id="UP000002498">
    <property type="component" value="Unassembled WGS sequence"/>
</dbReference>
<dbReference type="GO" id="GO:0005737">
    <property type="term" value="C:cytoplasm"/>
    <property type="evidence" value="ECO:0007669"/>
    <property type="project" value="TreeGrafter"/>
</dbReference>
<dbReference type="GO" id="GO:0016853">
    <property type="term" value="F:isomerase activity"/>
    <property type="evidence" value="ECO:0007669"/>
    <property type="project" value="UniProtKB-KW"/>
</dbReference>
<dbReference type="GO" id="GO:0016874">
    <property type="term" value="F:ligase activity"/>
    <property type="evidence" value="ECO:0007669"/>
    <property type="project" value="UniProtKB-KW"/>
</dbReference>
<dbReference type="GO" id="GO:0031177">
    <property type="term" value="F:phosphopantetheine binding"/>
    <property type="evidence" value="ECO:0007669"/>
    <property type="project" value="InterPro"/>
</dbReference>
<dbReference type="GO" id="GO:0043041">
    <property type="term" value="P:amino acid activation for nonribosomal peptide biosynthetic process"/>
    <property type="evidence" value="ECO:0007669"/>
    <property type="project" value="TreeGrafter"/>
</dbReference>
<dbReference type="GO" id="GO:0044550">
    <property type="term" value="P:secondary metabolite biosynthetic process"/>
    <property type="evidence" value="ECO:0007669"/>
    <property type="project" value="TreeGrafter"/>
</dbReference>
<dbReference type="CDD" id="cd05930">
    <property type="entry name" value="A_NRPS"/>
    <property type="match status" value="2"/>
</dbReference>
<dbReference type="CDD" id="cd05918">
    <property type="entry name" value="A_NRPS_SidN3_like"/>
    <property type="match status" value="4"/>
</dbReference>
<dbReference type="CDD" id="cd19542">
    <property type="entry name" value="CT_NRPS-like"/>
    <property type="match status" value="2"/>
</dbReference>
<dbReference type="CDD" id="cd19534">
    <property type="entry name" value="E_NRPS"/>
    <property type="match status" value="1"/>
</dbReference>
<dbReference type="CDD" id="cd19545">
    <property type="entry name" value="FUM14_C_NRPS-like"/>
    <property type="match status" value="2"/>
</dbReference>
<dbReference type="CDD" id="cd19531">
    <property type="entry name" value="LCL_NRPS-like"/>
    <property type="match status" value="2"/>
</dbReference>
<dbReference type="FunFam" id="3.30.300.30:FF:000084">
    <property type="entry name" value="Enniatin synthase"/>
    <property type="match status" value="1"/>
</dbReference>
<dbReference type="FunFam" id="3.30.559.30:FF:000002">
    <property type="entry name" value="Nonribosomal peptide synthase Pes1"/>
    <property type="match status" value="1"/>
</dbReference>
<dbReference type="FunFam" id="3.30.300.30:FF:000015">
    <property type="entry name" value="Nonribosomal peptide synthase SidD"/>
    <property type="match status" value="4"/>
</dbReference>
<dbReference type="FunFam" id="3.30.559.30:FF:000003">
    <property type="entry name" value="Nonribosomal peptide synthase SidD"/>
    <property type="match status" value="2"/>
</dbReference>
<dbReference type="FunFam" id="1.10.1200.10:FF:000005">
    <property type="entry name" value="Nonribosomal peptide synthetase 1"/>
    <property type="match status" value="6"/>
</dbReference>
<dbReference type="FunFam" id="3.40.50.12780:FF:000014">
    <property type="entry name" value="Nonribosomal peptide synthetase 1"/>
    <property type="match status" value="4"/>
</dbReference>
<dbReference type="Gene3D" id="3.30.300.30">
    <property type="match status" value="8"/>
</dbReference>
<dbReference type="Gene3D" id="3.40.50.980">
    <property type="match status" value="6"/>
</dbReference>
<dbReference type="Gene3D" id="1.10.1200.10">
    <property type="entry name" value="ACP-like"/>
    <property type="match status" value="6"/>
</dbReference>
<dbReference type="Gene3D" id="3.30.559.10">
    <property type="entry name" value="Chloramphenicol acetyltransferase-like domain"/>
    <property type="match status" value="7"/>
</dbReference>
<dbReference type="Gene3D" id="2.30.38.10">
    <property type="entry name" value="Luciferase, Domain 3"/>
    <property type="match status" value="3"/>
</dbReference>
<dbReference type="Gene3D" id="3.40.50.12780">
    <property type="entry name" value="N-terminal domain of ligase-like"/>
    <property type="match status" value="3"/>
</dbReference>
<dbReference type="Gene3D" id="3.30.559.30">
    <property type="entry name" value="Nonribosomal peptide synthetase, condensation domain"/>
    <property type="match status" value="8"/>
</dbReference>
<dbReference type="Gene3D" id="3.40.50.150">
    <property type="entry name" value="Vaccinia Virus protein VP39"/>
    <property type="match status" value="2"/>
</dbReference>
<dbReference type="InterPro" id="IPR010071">
    <property type="entry name" value="AA_adenyl_dom"/>
</dbReference>
<dbReference type="InterPro" id="IPR036736">
    <property type="entry name" value="ACP-like_sf"/>
</dbReference>
<dbReference type="InterPro" id="IPR045851">
    <property type="entry name" value="AMP-bd_C_sf"/>
</dbReference>
<dbReference type="InterPro" id="IPR020845">
    <property type="entry name" value="AMP-binding_CS"/>
</dbReference>
<dbReference type="InterPro" id="IPR000873">
    <property type="entry name" value="AMP-dep_synth/lig_dom"/>
</dbReference>
<dbReference type="InterPro" id="IPR042099">
    <property type="entry name" value="ANL_N_sf"/>
</dbReference>
<dbReference type="InterPro" id="IPR023213">
    <property type="entry name" value="CAT-like_dom_sf"/>
</dbReference>
<dbReference type="InterPro" id="IPR001242">
    <property type="entry name" value="Condensatn"/>
</dbReference>
<dbReference type="InterPro" id="IPR025714">
    <property type="entry name" value="Methyltranfer_dom"/>
</dbReference>
<dbReference type="InterPro" id="IPR020806">
    <property type="entry name" value="PKS_PP-bd"/>
</dbReference>
<dbReference type="InterPro" id="IPR009081">
    <property type="entry name" value="PP-bd_ACP"/>
</dbReference>
<dbReference type="InterPro" id="IPR006162">
    <property type="entry name" value="Ppantetheine_attach_site"/>
</dbReference>
<dbReference type="InterPro" id="IPR029063">
    <property type="entry name" value="SAM-dependent_MTases_sf"/>
</dbReference>
<dbReference type="NCBIfam" id="TIGR01733">
    <property type="entry name" value="AA-adenyl-dom"/>
    <property type="match status" value="6"/>
</dbReference>
<dbReference type="NCBIfam" id="NF003417">
    <property type="entry name" value="PRK04813.1"/>
    <property type="match status" value="8"/>
</dbReference>
<dbReference type="PANTHER" id="PTHR45527:SF1">
    <property type="entry name" value="FATTY ACID SYNTHASE"/>
    <property type="match status" value="1"/>
</dbReference>
<dbReference type="PANTHER" id="PTHR45527">
    <property type="entry name" value="NONRIBOSOMAL PEPTIDE SYNTHETASE"/>
    <property type="match status" value="1"/>
</dbReference>
<dbReference type="Pfam" id="PF00501">
    <property type="entry name" value="AMP-binding"/>
    <property type="match status" value="6"/>
</dbReference>
<dbReference type="Pfam" id="PF00668">
    <property type="entry name" value="Condensation"/>
    <property type="match status" value="7"/>
</dbReference>
<dbReference type="Pfam" id="PF13847">
    <property type="entry name" value="Methyltransf_31"/>
    <property type="match status" value="1"/>
</dbReference>
<dbReference type="Pfam" id="PF00550">
    <property type="entry name" value="PP-binding"/>
    <property type="match status" value="6"/>
</dbReference>
<dbReference type="SMART" id="SM00823">
    <property type="entry name" value="PKS_PP"/>
    <property type="match status" value="6"/>
</dbReference>
<dbReference type="SUPFAM" id="SSF56801">
    <property type="entry name" value="Acetyl-CoA synthetase-like"/>
    <property type="match status" value="6"/>
</dbReference>
<dbReference type="SUPFAM" id="SSF47336">
    <property type="entry name" value="ACP-like"/>
    <property type="match status" value="6"/>
</dbReference>
<dbReference type="SUPFAM" id="SSF52777">
    <property type="entry name" value="CoA-dependent acyltransferases"/>
    <property type="match status" value="15"/>
</dbReference>
<dbReference type="SUPFAM" id="SSF53335">
    <property type="entry name" value="S-adenosyl-L-methionine-dependent methyltransferases"/>
    <property type="match status" value="2"/>
</dbReference>
<dbReference type="PROSITE" id="PS00455">
    <property type="entry name" value="AMP_BINDING"/>
    <property type="match status" value="4"/>
</dbReference>
<dbReference type="PROSITE" id="PS50075">
    <property type="entry name" value="CARRIER"/>
    <property type="match status" value="6"/>
</dbReference>
<dbReference type="PROSITE" id="PS00012">
    <property type="entry name" value="PHOSPHOPANTETHEINE"/>
    <property type="match status" value="6"/>
</dbReference>
<organism>
    <name type="scientific">Metarhizium robertsii (strain ARSEF 23 / ATCC MYA-3075)</name>
    <name type="common">Metarhizium anisopliae (strain ARSEF 23)</name>
    <dbReference type="NCBI Taxonomy" id="655844"/>
    <lineage>
        <taxon>Eukaryota</taxon>
        <taxon>Fungi</taxon>
        <taxon>Dikarya</taxon>
        <taxon>Ascomycota</taxon>
        <taxon>Pezizomycotina</taxon>
        <taxon>Sordariomycetes</taxon>
        <taxon>Hypocreomycetidae</taxon>
        <taxon>Hypocreales</taxon>
        <taxon>Clavicipitaceae</taxon>
        <taxon>Metarhizium</taxon>
    </lineage>
</organism>
<proteinExistence type="evidence at protein level"/>
<comment type="function">
    <text evidence="4 5">Nonribosomal peptide synthetase; part of the gene cluster that mediates the biosynthesis of destruxins, insecticidal cyclic hexadepsipeptides which induce flaccid paralysis and visceral muscle contraction in insects through targeting the calcium channels and vacuolar-type ATPases (PubMed:22232661, PubMed:22367459). The aldo-keto reductase dtxS3 converts alpha-ketoisocaproic acid from deaminated leucine into alpha-hydroxyisocaproic acid (HIC), which is the first substrate for destruxin assembly by dtxS1 (PubMed:22232661). L-aspartate decarboxylase dtxS4 converts aspartic acid into beta-alanine, the last substrate for the destruxin assembly line performed by dtxS1 (PubMed:22232661). The nonribosomal peptide synthetase dtxS1 synthesizes destruxins B and B2, whereas the cytochrome P450 monooxygenase dtxS2 is required to convert destruxin B into other destruxin derivatives, including destructins C, D, A and E (PubMed:22232661). Destruxin E-diol (ED) is further produced in a non-enzymatic manner from destruxin E (PubMed:22232661). Destruxins play an important role in virulence and escape from insect host immune defenses (PubMed:22232661).</text>
</comment>
<comment type="pathway">
    <text evidence="4">Secondary metabolite biosynthesis.</text>
</comment>
<comment type="induction">
    <text evidence="5">Expression is low during early growth phases and increases with time to reach a steady high level at later growth stages (PubMed:22367459). Also expressed in conidia (PubMed:22367459).</text>
</comment>
<comment type="disruption phenotype">
    <text evidence="4">Impairs the production of destruxins either in CD medium or in silkworm larva (PubMed:22232661). Also impairs the ability to escape insect host immune defenses (PubMed:22232661).</text>
</comment>
<comment type="similarity">
    <text evidence="8">Belongs to the NRP synthetase family.</text>
</comment>
<reference key="1">
    <citation type="journal article" date="2011" name="PLoS Genet.">
        <title>Genome sequencing and comparative transcriptomics of the model entomopathogenic fungi Metarhizium anisopliae and M. acridum.</title>
        <authorList>
            <person name="Gao Q."/>
            <person name="Jin K."/>
            <person name="Ying S.-H."/>
            <person name="Zhang Y."/>
            <person name="Xiao G."/>
            <person name="Shang Y."/>
            <person name="Duan Z."/>
            <person name="Hu X."/>
            <person name="Xie X.-Q."/>
            <person name="Zhou G."/>
            <person name="Peng G."/>
            <person name="Luo Z."/>
            <person name="Huang W."/>
            <person name="Wang B."/>
            <person name="Fang W."/>
            <person name="Wang S."/>
            <person name="Zhong Y."/>
            <person name="Ma L.-J."/>
            <person name="St Leger R.J."/>
            <person name="Zhao G.-P."/>
            <person name="Pei Y."/>
            <person name="Feng M.-G."/>
            <person name="Xia Y."/>
            <person name="Wang C."/>
        </authorList>
    </citation>
    <scope>NUCLEOTIDE SEQUENCE [LARGE SCALE GENOMIC DNA]</scope>
    <source>
        <strain>ARSEF 23 / ATCC MYA-3075</strain>
    </source>
</reference>
<reference key="2">
    <citation type="journal article" date="2014" name="Proc. Natl. Acad. Sci. U.S.A.">
        <title>Trajectory and genomic determinants of fungal-pathogen speciation and host adaptation.</title>
        <authorList>
            <person name="Hu X."/>
            <person name="Xiao G."/>
            <person name="Zheng P."/>
            <person name="Shang Y."/>
            <person name="Su Y."/>
            <person name="Zhang X."/>
            <person name="Liu X."/>
            <person name="Zhan S."/>
            <person name="St Leger R.J."/>
            <person name="Wang C."/>
        </authorList>
    </citation>
    <scope>GENOME REANNOTATION</scope>
    <source>
        <strain>ARSEF 23 / ATCC MYA-3075</strain>
    </source>
</reference>
<reference key="3">
    <citation type="journal article" date="2012" name="Curr. Genet.">
        <title>Genetic basis of destruxin production in the entomopathogen Metarhizium robertsii.</title>
        <authorList>
            <person name="Giuliano Garisto Donzelli B."/>
            <person name="Krasnoff S.B."/>
            <person name="Moon Y.S."/>
            <person name="Sun-Moon Y."/>
            <person name="Churchill A.C."/>
            <person name="Gibson D.M."/>
        </authorList>
    </citation>
    <scope>FUNCTION</scope>
    <scope>INDUCTION</scope>
</reference>
<reference key="4">
    <citation type="journal article" date="2012" name="Proc. Natl. Acad. Sci. U.S.A.">
        <title>Unveiling the biosynthetic puzzle of destruxins in Metarhizium species.</title>
        <authorList>
            <person name="Wang B."/>
            <person name="Kang Q."/>
            <person name="Lu Y."/>
            <person name="Bai L."/>
            <person name="Wang C."/>
        </authorList>
    </citation>
    <scope>FUNCTION</scope>
    <scope>DISRUPTION PHENOTYPE</scope>
    <scope>CATALYTIC ACTIVITY</scope>
</reference>
<keyword id="KW-0413">Isomerase</keyword>
<keyword id="KW-0436">Ligase</keyword>
<keyword id="KW-0596">Phosphopantetheine</keyword>
<keyword id="KW-0597">Phosphoprotein</keyword>
<keyword id="KW-0677">Repeat</keyword>
<keyword id="KW-0843">Virulence</keyword>
<accession>E9FCP4</accession>
<protein>
    <recommendedName>
        <fullName evidence="8">Nonribosomal peptide synthetase dtxS1</fullName>
        <ecNumber evidence="4">6.3.2.-</ecNumber>
    </recommendedName>
    <alternativeName>
        <fullName evidence="6">Destruxin synthase dtxS1</fullName>
        <shortName evidence="7">DXS</shortName>
    </alternativeName>
    <alternativeName>
        <fullName evidence="6">Destruxin synthesis protein 1</fullName>
    </alternativeName>
</protein>
<gene>
    <name evidence="6" type="primary">dtxS1</name>
    <name type="ORF">MAA_10043</name>
</gene>
<evidence type="ECO:0000255" key="1"/>
<evidence type="ECO:0000255" key="2">
    <source>
        <dbReference type="PROSITE-ProRule" id="PRU00258"/>
    </source>
</evidence>
<evidence type="ECO:0000256" key="3">
    <source>
        <dbReference type="SAM" id="MobiDB-lite"/>
    </source>
</evidence>
<evidence type="ECO:0000269" key="4">
    <source>
    </source>
</evidence>
<evidence type="ECO:0000269" key="5">
    <source>
    </source>
</evidence>
<evidence type="ECO:0000303" key="6">
    <source>
    </source>
</evidence>
<evidence type="ECO:0000303" key="7">
    <source>
    </source>
</evidence>
<evidence type="ECO:0000305" key="8"/>